<evidence type="ECO:0000255" key="1">
    <source>
        <dbReference type="HAMAP-Rule" id="MF_00549"/>
    </source>
</evidence>
<accession>Q46YB8</accession>
<keyword id="KW-0456">Lyase</keyword>
<protein>
    <recommendedName>
        <fullName evidence="1">Methylglyoxal synthase</fullName>
        <shortName evidence="1">MGS</shortName>
        <ecNumber evidence="1">4.2.3.3</ecNumber>
    </recommendedName>
</protein>
<sequence length="130" mass="14257">MMTRPRIALIAHDHKKDDIVAFATRHREFLSQCELLATGTTGGRLIDEVKLDVTRMLSGPWGGDLQIGAQLAEGRVRAVIFLRDPMTPQPHEPDINALVRACDVHNVPCATNVATADLLIAELSRVEAQP</sequence>
<feature type="chain" id="PRO_1000017823" description="Methylglyoxal synthase">
    <location>
        <begin position="1"/>
        <end position="130"/>
    </location>
</feature>
<feature type="domain" description="MGS-like" evidence="1">
    <location>
        <begin position="1"/>
        <end position="130"/>
    </location>
</feature>
<feature type="active site" description="Proton donor/acceptor" evidence="1">
    <location>
        <position position="64"/>
    </location>
</feature>
<feature type="binding site" evidence="1">
    <location>
        <position position="12"/>
    </location>
    <ligand>
        <name>substrate</name>
    </ligand>
</feature>
<feature type="binding site" evidence="1">
    <location>
        <position position="16"/>
    </location>
    <ligand>
        <name>substrate</name>
    </ligand>
</feature>
<feature type="binding site" evidence="1">
    <location>
        <begin position="38"/>
        <end position="41"/>
    </location>
    <ligand>
        <name>substrate</name>
    </ligand>
</feature>
<feature type="binding site" evidence="1">
    <location>
        <begin position="58"/>
        <end position="59"/>
    </location>
    <ligand>
        <name>substrate</name>
    </ligand>
</feature>
<feature type="binding site" evidence="1">
    <location>
        <position position="91"/>
    </location>
    <ligand>
        <name>substrate</name>
    </ligand>
</feature>
<reference key="1">
    <citation type="journal article" date="2010" name="PLoS ONE">
        <title>The complete multipartite genome sequence of Cupriavidus necator JMP134, a versatile pollutant degrader.</title>
        <authorList>
            <person name="Lykidis A."/>
            <person name="Perez-Pantoja D."/>
            <person name="Ledger T."/>
            <person name="Mavromatis K."/>
            <person name="Anderson I.J."/>
            <person name="Ivanova N.N."/>
            <person name="Hooper S.D."/>
            <person name="Lapidus A."/>
            <person name="Lucas S."/>
            <person name="Gonzalez B."/>
            <person name="Kyrpides N.C."/>
        </authorList>
    </citation>
    <scope>NUCLEOTIDE SEQUENCE [LARGE SCALE GENOMIC DNA]</scope>
    <source>
        <strain>JMP134 / LMG 1197</strain>
    </source>
</reference>
<organism>
    <name type="scientific">Cupriavidus pinatubonensis (strain JMP 134 / LMG 1197)</name>
    <name type="common">Cupriavidus necator (strain JMP 134)</name>
    <dbReference type="NCBI Taxonomy" id="264198"/>
    <lineage>
        <taxon>Bacteria</taxon>
        <taxon>Pseudomonadati</taxon>
        <taxon>Pseudomonadota</taxon>
        <taxon>Betaproteobacteria</taxon>
        <taxon>Burkholderiales</taxon>
        <taxon>Burkholderiaceae</taxon>
        <taxon>Cupriavidus</taxon>
    </lineage>
</organism>
<proteinExistence type="inferred from homology"/>
<comment type="function">
    <text evidence="1">Catalyzes the formation of methylglyoxal from dihydroxyacetone phosphate.</text>
</comment>
<comment type="catalytic activity">
    <reaction evidence="1">
        <text>dihydroxyacetone phosphate = methylglyoxal + phosphate</text>
        <dbReference type="Rhea" id="RHEA:17937"/>
        <dbReference type="ChEBI" id="CHEBI:17158"/>
        <dbReference type="ChEBI" id="CHEBI:43474"/>
        <dbReference type="ChEBI" id="CHEBI:57642"/>
        <dbReference type="EC" id="4.2.3.3"/>
    </reaction>
</comment>
<comment type="similarity">
    <text evidence="1">Belongs to the methylglyoxal synthase family.</text>
</comment>
<dbReference type="EC" id="4.2.3.3" evidence="1"/>
<dbReference type="EMBL" id="CP000090">
    <property type="protein sequence ID" value="AAZ61865.1"/>
    <property type="molecule type" value="Genomic_DNA"/>
</dbReference>
<dbReference type="SMR" id="Q46YB8"/>
<dbReference type="STRING" id="264198.Reut_A2504"/>
<dbReference type="KEGG" id="reu:Reut_A2504"/>
<dbReference type="eggNOG" id="COG1803">
    <property type="taxonomic scope" value="Bacteria"/>
</dbReference>
<dbReference type="HOGENOM" id="CLU_120420_1_0_4"/>
<dbReference type="GO" id="GO:0005829">
    <property type="term" value="C:cytosol"/>
    <property type="evidence" value="ECO:0007669"/>
    <property type="project" value="TreeGrafter"/>
</dbReference>
<dbReference type="GO" id="GO:0008929">
    <property type="term" value="F:methylglyoxal synthase activity"/>
    <property type="evidence" value="ECO:0007669"/>
    <property type="project" value="UniProtKB-UniRule"/>
</dbReference>
<dbReference type="GO" id="GO:0019242">
    <property type="term" value="P:methylglyoxal biosynthetic process"/>
    <property type="evidence" value="ECO:0007669"/>
    <property type="project" value="UniProtKB-UniRule"/>
</dbReference>
<dbReference type="CDD" id="cd01422">
    <property type="entry name" value="MGS"/>
    <property type="match status" value="1"/>
</dbReference>
<dbReference type="Gene3D" id="3.40.50.1380">
    <property type="entry name" value="Methylglyoxal synthase-like domain"/>
    <property type="match status" value="1"/>
</dbReference>
<dbReference type="HAMAP" id="MF_00549">
    <property type="entry name" value="Methylglyoxal_synth"/>
    <property type="match status" value="1"/>
</dbReference>
<dbReference type="InterPro" id="IPR004363">
    <property type="entry name" value="Methylgl_synth"/>
</dbReference>
<dbReference type="InterPro" id="IPR018148">
    <property type="entry name" value="Methylglyoxal_synth_AS"/>
</dbReference>
<dbReference type="InterPro" id="IPR011607">
    <property type="entry name" value="MGS-like_dom"/>
</dbReference>
<dbReference type="InterPro" id="IPR036914">
    <property type="entry name" value="MGS-like_dom_sf"/>
</dbReference>
<dbReference type="NCBIfam" id="TIGR00160">
    <property type="entry name" value="MGSA"/>
    <property type="match status" value="1"/>
</dbReference>
<dbReference type="NCBIfam" id="NF003559">
    <property type="entry name" value="PRK05234.1"/>
    <property type="match status" value="1"/>
</dbReference>
<dbReference type="PANTHER" id="PTHR30492">
    <property type="entry name" value="METHYLGLYOXAL SYNTHASE"/>
    <property type="match status" value="1"/>
</dbReference>
<dbReference type="PANTHER" id="PTHR30492:SF0">
    <property type="entry name" value="METHYLGLYOXAL SYNTHASE"/>
    <property type="match status" value="1"/>
</dbReference>
<dbReference type="Pfam" id="PF02142">
    <property type="entry name" value="MGS"/>
    <property type="match status" value="1"/>
</dbReference>
<dbReference type="PIRSF" id="PIRSF006614">
    <property type="entry name" value="Methylglyox_syn"/>
    <property type="match status" value="1"/>
</dbReference>
<dbReference type="SMART" id="SM00851">
    <property type="entry name" value="MGS"/>
    <property type="match status" value="1"/>
</dbReference>
<dbReference type="SUPFAM" id="SSF52335">
    <property type="entry name" value="Methylglyoxal synthase-like"/>
    <property type="match status" value="1"/>
</dbReference>
<dbReference type="PROSITE" id="PS01335">
    <property type="entry name" value="METHYLGLYOXAL_SYNTH"/>
    <property type="match status" value="1"/>
</dbReference>
<dbReference type="PROSITE" id="PS51855">
    <property type="entry name" value="MGS"/>
    <property type="match status" value="1"/>
</dbReference>
<gene>
    <name evidence="1" type="primary">mgsA</name>
    <name type="ordered locus">Reut_A2504</name>
</gene>
<name>MGSA_CUPPJ</name>